<evidence type="ECO:0000255" key="1">
    <source>
        <dbReference type="PROSITE-ProRule" id="PRU00434"/>
    </source>
</evidence>
<evidence type="ECO:0000269" key="2">
    <source>
    </source>
</evidence>
<evidence type="ECO:0000305" key="3"/>
<evidence type="ECO:0007829" key="4">
    <source>
        <dbReference type="PDB" id="7Z15"/>
    </source>
</evidence>
<evidence type="ECO:0007829" key="5">
    <source>
        <dbReference type="PDB" id="7Z17"/>
    </source>
</evidence>
<feature type="chain" id="PRO_0000092744" description="Putative phosphonates utilization ATP-binding protein PhnK">
    <location>
        <begin position="1"/>
        <end position="252"/>
    </location>
</feature>
<feature type="domain" description="ABC transporter" evidence="1">
    <location>
        <begin position="6"/>
        <end position="246"/>
    </location>
</feature>
<feature type="binding site" evidence="1">
    <location>
        <begin position="38"/>
        <end position="45"/>
    </location>
    <ligand>
        <name>ATP</name>
        <dbReference type="ChEBI" id="CHEBI:30616"/>
    </ligand>
</feature>
<feature type="sequence conflict" description="In Ref. 3; AAA96996." evidence="3" ref="3">
    <original>L</original>
    <variation>Q</variation>
    <location>
        <position position="47"/>
    </location>
</feature>
<feature type="strand" evidence="4">
    <location>
        <begin position="5"/>
        <end position="16"/>
    </location>
</feature>
<feature type="strand" evidence="4">
    <location>
        <begin position="19"/>
        <end position="28"/>
    </location>
</feature>
<feature type="strand" evidence="4">
    <location>
        <begin position="33"/>
        <end position="38"/>
    </location>
</feature>
<feature type="helix" evidence="5">
    <location>
        <begin position="40"/>
        <end position="42"/>
    </location>
</feature>
<feature type="helix" evidence="4">
    <location>
        <begin position="44"/>
        <end position="51"/>
    </location>
</feature>
<feature type="strand" evidence="4">
    <location>
        <begin position="58"/>
        <end position="64"/>
    </location>
</feature>
<feature type="turn" evidence="4">
    <location>
        <begin position="69"/>
        <end position="71"/>
    </location>
</feature>
<feature type="helix" evidence="4">
    <location>
        <begin position="74"/>
        <end position="83"/>
    </location>
</feature>
<feature type="strand" evidence="4">
    <location>
        <begin position="85"/>
        <end position="88"/>
    </location>
</feature>
<feature type="helix" evidence="4">
    <location>
        <begin position="92"/>
        <end position="95"/>
    </location>
</feature>
<feature type="helix" evidence="4">
    <location>
        <begin position="102"/>
        <end position="112"/>
    </location>
</feature>
<feature type="helix" evidence="4">
    <location>
        <begin position="118"/>
        <end position="131"/>
    </location>
</feature>
<feature type="helix" evidence="4">
    <location>
        <begin position="136"/>
        <end position="138"/>
    </location>
</feature>
<feature type="helix" evidence="4">
    <location>
        <begin position="143"/>
        <end position="145"/>
    </location>
</feature>
<feature type="helix" evidence="4">
    <location>
        <begin position="148"/>
        <end position="160"/>
    </location>
</feature>
<feature type="strand" evidence="4">
    <location>
        <begin position="165"/>
        <end position="171"/>
    </location>
</feature>
<feature type="turn" evidence="4">
    <location>
        <begin position="172"/>
        <end position="175"/>
    </location>
</feature>
<feature type="helix" evidence="4">
    <location>
        <begin position="178"/>
        <end position="195"/>
    </location>
</feature>
<feature type="strand" evidence="4">
    <location>
        <begin position="198"/>
        <end position="202"/>
    </location>
</feature>
<feature type="helix" evidence="4">
    <location>
        <begin position="206"/>
        <end position="212"/>
    </location>
</feature>
<feature type="strand" evidence="4">
    <location>
        <begin position="214"/>
        <end position="220"/>
    </location>
</feature>
<feature type="strand" evidence="4">
    <location>
        <begin position="223"/>
        <end position="229"/>
    </location>
</feature>
<feature type="helix" evidence="4">
    <location>
        <begin position="230"/>
        <end position="235"/>
    </location>
</feature>
<feature type="helix" evidence="4">
    <location>
        <begin position="240"/>
        <end position="247"/>
    </location>
</feature>
<organism>
    <name type="scientific">Escherichia coli (strain K12)</name>
    <dbReference type="NCBI Taxonomy" id="83333"/>
    <lineage>
        <taxon>Bacteria</taxon>
        <taxon>Pseudomonadati</taxon>
        <taxon>Pseudomonadota</taxon>
        <taxon>Gammaproteobacteria</taxon>
        <taxon>Enterobacterales</taxon>
        <taxon>Enterobacteriaceae</taxon>
        <taxon>Escherichia</taxon>
    </lineage>
</organism>
<dbReference type="EMBL" id="J05260">
    <property type="protein sequence ID" value="AAA24349.1"/>
    <property type="molecule type" value="Genomic_DNA"/>
</dbReference>
<dbReference type="EMBL" id="D90227">
    <property type="protein sequence ID" value="BAA14271.1"/>
    <property type="molecule type" value="Genomic_DNA"/>
</dbReference>
<dbReference type="EMBL" id="U14003">
    <property type="protein sequence ID" value="AAA96996.1"/>
    <property type="molecule type" value="Genomic_DNA"/>
</dbReference>
<dbReference type="EMBL" id="U00096">
    <property type="protein sequence ID" value="AAT48240.1"/>
    <property type="molecule type" value="Genomic_DNA"/>
</dbReference>
<dbReference type="EMBL" id="AP009048">
    <property type="protein sequence ID" value="BAE78100.1"/>
    <property type="molecule type" value="Genomic_DNA"/>
</dbReference>
<dbReference type="PIR" id="S56325">
    <property type="entry name" value="S56325"/>
</dbReference>
<dbReference type="RefSeq" id="WP_001075514.1">
    <property type="nucleotide sequence ID" value="NZ_SSZK01000016.1"/>
</dbReference>
<dbReference type="RefSeq" id="YP_026282.1">
    <property type="nucleotide sequence ID" value="NC_000913.3"/>
</dbReference>
<dbReference type="PDB" id="7Z15">
    <property type="method" value="EM"/>
    <property type="resolution" value="1.93 A"/>
    <property type="chains" value="I/J=1-252"/>
</dbReference>
<dbReference type="PDB" id="7Z16">
    <property type="method" value="EM"/>
    <property type="resolution" value="2.09 A"/>
    <property type="chains" value="I/J=1-252"/>
</dbReference>
<dbReference type="PDB" id="7Z17">
    <property type="method" value="EM"/>
    <property type="resolution" value="2.57 A"/>
    <property type="chains" value="I/J=1-252"/>
</dbReference>
<dbReference type="PDB" id="7Z18">
    <property type="method" value="EM"/>
    <property type="resolution" value="1.98 A"/>
    <property type="chains" value="I/J=1-252"/>
</dbReference>
<dbReference type="PDB" id="7Z19">
    <property type="method" value="EM"/>
    <property type="resolution" value="2.57 A"/>
    <property type="chains" value="I=1-252"/>
</dbReference>
<dbReference type="PDBsum" id="7Z15"/>
<dbReference type="PDBsum" id="7Z16"/>
<dbReference type="PDBsum" id="7Z17"/>
<dbReference type="PDBsum" id="7Z18"/>
<dbReference type="PDBsum" id="7Z19"/>
<dbReference type="EMDB" id="EMD-14441"/>
<dbReference type="EMDB" id="EMD-14442"/>
<dbReference type="EMDB" id="EMD-14443"/>
<dbReference type="EMDB" id="EMD-14444"/>
<dbReference type="EMDB" id="EMD-14445"/>
<dbReference type="SMR" id="P16678"/>
<dbReference type="BioGRID" id="4262020">
    <property type="interactions" value="13"/>
</dbReference>
<dbReference type="BioGRID" id="852904">
    <property type="interactions" value="2"/>
</dbReference>
<dbReference type="ComplexPortal" id="CPX-1929">
    <property type="entry name" value="PhnGHIJKL complex"/>
</dbReference>
<dbReference type="DIP" id="DIP-10490N"/>
<dbReference type="FunCoup" id="P16678">
    <property type="interactions" value="158"/>
</dbReference>
<dbReference type="IntAct" id="P16678">
    <property type="interactions" value="6"/>
</dbReference>
<dbReference type="STRING" id="511145.b4097"/>
<dbReference type="PaxDb" id="511145-b4097"/>
<dbReference type="DNASU" id="948611"/>
<dbReference type="EnsemblBacteria" id="AAT48240">
    <property type="protein sequence ID" value="AAT48240"/>
    <property type="gene ID" value="b4097"/>
</dbReference>
<dbReference type="GeneID" id="93777737"/>
<dbReference type="GeneID" id="948611"/>
<dbReference type="KEGG" id="ecj:JW5727"/>
<dbReference type="KEGG" id="eco:b4097"/>
<dbReference type="KEGG" id="ecoc:C3026_22145"/>
<dbReference type="PATRIC" id="fig|1411691.4.peg.2603"/>
<dbReference type="EchoBASE" id="EB0714"/>
<dbReference type="eggNOG" id="COG4107">
    <property type="taxonomic scope" value="Bacteria"/>
</dbReference>
<dbReference type="HOGENOM" id="CLU_000604_1_23_6"/>
<dbReference type="InParanoid" id="P16678"/>
<dbReference type="OMA" id="RLMAVGW"/>
<dbReference type="OrthoDB" id="9784450at2"/>
<dbReference type="PhylomeDB" id="P16678"/>
<dbReference type="BioCyc" id="EcoCyc:PHNK-MONOMER"/>
<dbReference type="BioCyc" id="MetaCyc:PHNK-MONOMER"/>
<dbReference type="PRO" id="PR:P16678"/>
<dbReference type="Proteomes" id="UP000000625">
    <property type="component" value="Chromosome"/>
</dbReference>
<dbReference type="GO" id="GO:0061694">
    <property type="term" value="C:alpha-D-ribose 1-methylphosphonate 5-triphosphate synthase complex"/>
    <property type="evidence" value="ECO:0000353"/>
    <property type="project" value="ComplexPortal"/>
</dbReference>
<dbReference type="GO" id="GO:1904176">
    <property type="term" value="C:carbon phosphorus lyase complex"/>
    <property type="evidence" value="ECO:0000314"/>
    <property type="project" value="EcoCyc"/>
</dbReference>
<dbReference type="GO" id="GO:0005524">
    <property type="term" value="F:ATP binding"/>
    <property type="evidence" value="ECO:0007669"/>
    <property type="project" value="UniProtKB-KW"/>
</dbReference>
<dbReference type="GO" id="GO:0016887">
    <property type="term" value="F:ATP hydrolysis activity"/>
    <property type="evidence" value="ECO:0007669"/>
    <property type="project" value="InterPro"/>
</dbReference>
<dbReference type="GO" id="GO:0019700">
    <property type="term" value="P:organic phosphonate catabolic process"/>
    <property type="evidence" value="ECO:0000315"/>
    <property type="project" value="EcoCyc"/>
</dbReference>
<dbReference type="GO" id="GO:0019634">
    <property type="term" value="P:organic phosphonate metabolic process"/>
    <property type="evidence" value="ECO:0000314"/>
    <property type="project" value="ComplexPortal"/>
</dbReference>
<dbReference type="GO" id="GO:0015716">
    <property type="term" value="P:organic phosphonate transport"/>
    <property type="evidence" value="ECO:0000314"/>
    <property type="project" value="ComplexPortal"/>
</dbReference>
<dbReference type="GO" id="GO:0015833">
    <property type="term" value="P:peptide transport"/>
    <property type="evidence" value="ECO:0007669"/>
    <property type="project" value="InterPro"/>
</dbReference>
<dbReference type="CDD" id="cd03257">
    <property type="entry name" value="ABC_NikE_OppD_transporters"/>
    <property type="match status" value="1"/>
</dbReference>
<dbReference type="FunFam" id="3.40.50.300:FF:001017">
    <property type="entry name" value="Phosphonate C-P lyase system protein PhnK"/>
    <property type="match status" value="1"/>
</dbReference>
<dbReference type="Gene3D" id="3.40.50.300">
    <property type="entry name" value="P-loop containing nucleotide triphosphate hydrolases"/>
    <property type="match status" value="1"/>
</dbReference>
<dbReference type="InterPro" id="IPR003593">
    <property type="entry name" value="AAA+_ATPase"/>
</dbReference>
<dbReference type="InterPro" id="IPR003439">
    <property type="entry name" value="ABC_transporter-like_ATP-bd"/>
</dbReference>
<dbReference type="InterPro" id="IPR017871">
    <property type="entry name" value="ABC_transporter-like_CS"/>
</dbReference>
<dbReference type="InterPro" id="IPR013563">
    <property type="entry name" value="Oligopep_ABC_C"/>
</dbReference>
<dbReference type="InterPro" id="IPR027417">
    <property type="entry name" value="P-loop_NTPase"/>
</dbReference>
<dbReference type="InterPro" id="IPR012700">
    <property type="entry name" value="PhnK"/>
</dbReference>
<dbReference type="NCBIfam" id="TIGR02323">
    <property type="entry name" value="CP_lyasePhnK"/>
    <property type="match status" value="1"/>
</dbReference>
<dbReference type="PANTHER" id="PTHR42764">
    <property type="entry name" value="PHOSPHONATES UTILIZATION ATP-BINDING PROTEIN PHNK-RELATED"/>
    <property type="match status" value="1"/>
</dbReference>
<dbReference type="PANTHER" id="PTHR42764:SF1">
    <property type="entry name" value="PHOSPHONATES UTILIZATION ATP-BINDING PROTEIN PHNK-RELATED"/>
    <property type="match status" value="1"/>
</dbReference>
<dbReference type="Pfam" id="PF00005">
    <property type="entry name" value="ABC_tran"/>
    <property type="match status" value="1"/>
</dbReference>
<dbReference type="Pfam" id="PF08352">
    <property type="entry name" value="oligo_HPY"/>
    <property type="match status" value="1"/>
</dbReference>
<dbReference type="PIRSF" id="PIRSF037116">
    <property type="entry name" value="CP_lyase_PhnK"/>
    <property type="match status" value="1"/>
</dbReference>
<dbReference type="SMART" id="SM00382">
    <property type="entry name" value="AAA"/>
    <property type="match status" value="1"/>
</dbReference>
<dbReference type="SUPFAM" id="SSF52540">
    <property type="entry name" value="P-loop containing nucleoside triphosphate hydrolases"/>
    <property type="match status" value="1"/>
</dbReference>
<dbReference type="PROSITE" id="PS00211">
    <property type="entry name" value="ABC_TRANSPORTER_1"/>
    <property type="match status" value="1"/>
</dbReference>
<dbReference type="PROSITE" id="PS50893">
    <property type="entry name" value="ABC_TRANSPORTER_2"/>
    <property type="match status" value="1"/>
</dbReference>
<keyword id="KW-0002">3D-structure</keyword>
<keyword id="KW-0067">ATP-binding</keyword>
<keyword id="KW-0547">Nucleotide-binding</keyword>
<keyword id="KW-1185">Reference proteome</keyword>
<keyword id="KW-0813">Transport</keyword>
<reference key="1">
    <citation type="journal article" date="1990" name="J. Biol. Chem.">
        <title>Molecular biology of carbon-phosphorus bond cleavage. Cloning and sequencing of the phn (psiD) genes involved in alkylphosphonate uptake and C-P lyase activity in Escherichia coli B.</title>
        <authorList>
            <person name="Chen C.-M."/>
            <person name="Ye Q.-Z."/>
            <person name="Zhu Z."/>
            <person name="Wanner B.L."/>
            <person name="Walsh C.T."/>
        </authorList>
    </citation>
    <scope>NUCLEOTIDE SEQUENCE [GENOMIC DNA]</scope>
    <source>
        <strain>B</strain>
    </source>
</reference>
<reference key="2">
    <citation type="journal article" date="1991" name="J. Bacteriol.">
        <title>Molecular analysis of the cryptic and functional phn operons for phosphonate use in Escherichia coli K-12.</title>
        <authorList>
            <person name="Makino K."/>
            <person name="Kim S.K."/>
            <person name="Shinagawa H."/>
            <person name="Amemura M."/>
            <person name="Nakata A."/>
        </authorList>
    </citation>
    <scope>NUCLEOTIDE SEQUENCE [GENOMIC DNA]</scope>
    <source>
        <strain>K12</strain>
    </source>
</reference>
<reference key="3">
    <citation type="journal article" date="1995" name="Nucleic Acids Res.">
        <title>Analysis of the Escherichia coli genome VI: DNA sequence of the region from 92.8 through 100 minutes.</title>
        <authorList>
            <person name="Burland V.D."/>
            <person name="Plunkett G. III"/>
            <person name="Sofia H.J."/>
            <person name="Daniels D.L."/>
            <person name="Blattner F.R."/>
        </authorList>
    </citation>
    <scope>NUCLEOTIDE SEQUENCE [LARGE SCALE GENOMIC DNA]</scope>
    <source>
        <strain>K12 / MG1655 / ATCC 47076</strain>
    </source>
</reference>
<reference key="4">
    <citation type="journal article" date="1997" name="Science">
        <title>The complete genome sequence of Escherichia coli K-12.</title>
        <authorList>
            <person name="Blattner F.R."/>
            <person name="Plunkett G. III"/>
            <person name="Bloch C.A."/>
            <person name="Perna N.T."/>
            <person name="Burland V."/>
            <person name="Riley M."/>
            <person name="Collado-Vides J."/>
            <person name="Glasner J.D."/>
            <person name="Rode C.K."/>
            <person name="Mayhew G.F."/>
            <person name="Gregor J."/>
            <person name="Davis N.W."/>
            <person name="Kirkpatrick H.A."/>
            <person name="Goeden M.A."/>
            <person name="Rose D.J."/>
            <person name="Mau B."/>
            <person name="Shao Y."/>
        </authorList>
    </citation>
    <scope>NUCLEOTIDE SEQUENCE [LARGE SCALE GENOMIC DNA]</scope>
    <source>
        <strain>K12 / MG1655 / ATCC 47076</strain>
    </source>
</reference>
<reference key="5">
    <citation type="journal article" date="2006" name="Nucleic Acids Res.">
        <title>Escherichia coli K-12: a cooperatively developed annotation snapshot -- 2005.</title>
        <authorList>
            <person name="Riley M."/>
            <person name="Abe T."/>
            <person name="Arnaud M.B."/>
            <person name="Berlyn M.K.B."/>
            <person name="Blattner F.R."/>
            <person name="Chaudhuri R.R."/>
            <person name="Glasner J.D."/>
            <person name="Horiuchi T."/>
            <person name="Keseler I.M."/>
            <person name="Kosuge T."/>
            <person name="Mori H."/>
            <person name="Perna N.T."/>
            <person name="Plunkett G. III"/>
            <person name="Rudd K.E."/>
            <person name="Serres M.H."/>
            <person name="Thomas G.H."/>
            <person name="Thomson N.R."/>
            <person name="Wishart D."/>
            <person name="Wanner B.L."/>
        </authorList>
    </citation>
    <scope>SEQUENCE REVISION TO 47</scope>
</reference>
<reference key="6">
    <citation type="journal article" date="2006" name="Mol. Syst. Biol.">
        <title>Highly accurate genome sequences of Escherichia coli K-12 strains MG1655 and W3110.</title>
        <authorList>
            <person name="Hayashi K."/>
            <person name="Morooka N."/>
            <person name="Yamamoto Y."/>
            <person name="Fujita K."/>
            <person name="Isono K."/>
            <person name="Choi S."/>
            <person name="Ohtsubo E."/>
            <person name="Baba T."/>
            <person name="Wanner B.L."/>
            <person name="Mori H."/>
            <person name="Horiuchi T."/>
        </authorList>
    </citation>
    <scope>NUCLEOTIDE SEQUENCE [LARGE SCALE GENOMIC DNA]</scope>
    <source>
        <strain>K12 / W3110 / ATCC 27325 / DSM 5911</strain>
    </source>
</reference>
<reference key="7">
    <citation type="journal article" date="2011" name="Nature">
        <title>Intermediates in the transformation of phosphonates to phosphate by bacteria.</title>
        <authorList>
            <person name="Kamat S.S."/>
            <person name="Williams H.J."/>
            <person name="Raushel F.M."/>
        </authorList>
    </citation>
    <scope>NO FUNCTION IN RPNTP SYNTHESIS</scope>
    <source>
        <strain>K12</strain>
    </source>
</reference>
<reference key="8">
    <citation type="journal article" date="2011" name="Proc. Natl. Acad. Sci. U.S.A.">
        <title>Five phosphonate operon gene products as components of a multi-subunit complex of the carbon-phosphorus lyase pathway.</title>
        <authorList>
            <person name="Jochimsen B."/>
            <person name="Lolle S."/>
            <person name="McSorley F.R."/>
            <person name="Nabi M."/>
            <person name="Stougaard J."/>
            <person name="Zechel D.L."/>
            <person name="Hove-Jensen B."/>
        </authorList>
    </citation>
    <scope>SUBUNIT</scope>
    <source>
        <strain>K12</strain>
    </source>
</reference>
<accession>P16678</accession>
<accession>Q2M6K6</accession>
<name>PHNK_ECOLI</name>
<gene>
    <name type="primary">phnK</name>
    <name type="ordered locus">b4097</name>
    <name type="ordered locus">JW5727</name>
</gene>
<proteinExistence type="evidence at protein level"/>
<protein>
    <recommendedName>
        <fullName>Putative phosphonates utilization ATP-binding protein PhnK</fullName>
    </recommendedName>
</protein>
<comment type="function">
    <text>Belongs to an operon involved in alkylphosphonate uptake and C-P lyase. Exact function not known. PhnK is not required for the ribophosphonate triphosphate (RPnTP) synthase reaction.</text>
</comment>
<comment type="subunit">
    <text evidence="2">Forms a complex with PhnG, PhnH, PhnI and PhnJ with the suggested composition PhnG(4)H(2)I(2)J(2)K.</text>
</comment>
<comment type="similarity">
    <text evidence="3">Belongs to the ABC transporter superfamily.</text>
</comment>
<sequence length="252" mass="27831">MNQPLLSVNNLTHLYAPGKGFSDVSFDLWPGEVLGIVGESGSGKTTLLKSISARLTPQQGEIHYENRSLYAMSEADRRRLLRTEWGVVHQHPLDGLRRQVSAGGNIGERLMATGARHYGDIRATAQKWLEEVEIPANRIDDLPTTFSGGMQQRLQIARNLVTHPKLVFMDEPTGGLDVSVQARLLDLLRGLVVELNLAVVIVTHDLGVARLLADRLLVMKQGQVVESGLTDRVLDDPHHPYTQLLVSSVLQN</sequence>